<feature type="chain" id="PRO_0000205238" description="Isopentenyl-diphosphate Delta-isomerase II">
    <location>
        <begin position="1"/>
        <end position="290"/>
    </location>
</feature>
<feature type="domain" description="Nudix hydrolase" evidence="2">
    <location>
        <begin position="108"/>
        <end position="260"/>
    </location>
</feature>
<feature type="active site" evidence="1">
    <location>
        <position position="145"/>
    </location>
</feature>
<feature type="active site" evidence="1">
    <location>
        <position position="207"/>
    </location>
</feature>
<protein>
    <recommendedName>
        <fullName>Isopentenyl-diphosphate Delta-isomerase II</fullName>
        <ecNumber>5.3.3.2</ecNumber>
    </recommendedName>
    <alternativeName>
        <fullName>Isopentenyl pyrophosphate isomerase II</fullName>
        <shortName>IPP isomerase II</shortName>
    </alternativeName>
</protein>
<evidence type="ECO:0000250" key="1"/>
<evidence type="ECO:0000255" key="2">
    <source>
        <dbReference type="PROSITE-ProRule" id="PRU00794"/>
    </source>
</evidence>
<evidence type="ECO:0000305" key="3"/>
<dbReference type="EC" id="5.3.3.2"/>
<dbReference type="EMBL" id="U48962">
    <property type="protein sequence ID" value="AAB67742.1"/>
    <property type="molecule type" value="Genomic_DNA"/>
</dbReference>
<dbReference type="SMR" id="Q39664"/>
<dbReference type="UniPathway" id="UPA00059">
    <property type="reaction ID" value="UER00104"/>
</dbReference>
<dbReference type="UniPathway" id="UPA00668"/>
<dbReference type="GO" id="GO:0005737">
    <property type="term" value="C:cytoplasm"/>
    <property type="evidence" value="ECO:0007669"/>
    <property type="project" value="TreeGrafter"/>
</dbReference>
<dbReference type="GO" id="GO:0004452">
    <property type="term" value="F:isopentenyl-diphosphate delta-isomerase activity"/>
    <property type="evidence" value="ECO:0007669"/>
    <property type="project" value="UniProtKB-EC"/>
</dbReference>
<dbReference type="GO" id="GO:0015995">
    <property type="term" value="P:chlorophyll biosynthetic process"/>
    <property type="evidence" value="ECO:0007669"/>
    <property type="project" value="UniProtKB-UniPathway"/>
</dbReference>
<dbReference type="GO" id="GO:0050992">
    <property type="term" value="P:dimethylallyl diphosphate biosynthetic process"/>
    <property type="evidence" value="ECO:0007669"/>
    <property type="project" value="UniProtKB-UniPathway"/>
</dbReference>
<dbReference type="GO" id="GO:0009240">
    <property type="term" value="P:isopentenyl diphosphate biosynthetic process"/>
    <property type="evidence" value="ECO:0007669"/>
    <property type="project" value="TreeGrafter"/>
</dbReference>
<dbReference type="GO" id="GO:0015979">
    <property type="term" value="P:photosynthesis"/>
    <property type="evidence" value="ECO:0007669"/>
    <property type="project" value="UniProtKB-KW"/>
</dbReference>
<dbReference type="CDD" id="cd02885">
    <property type="entry name" value="NUDIX_IPP_Isomerase"/>
    <property type="match status" value="1"/>
</dbReference>
<dbReference type="FunFam" id="3.90.79.10:FF:000025">
    <property type="entry name" value="isopentenyl-diphosphate Delta-isomerase I"/>
    <property type="match status" value="1"/>
</dbReference>
<dbReference type="Gene3D" id="3.90.79.10">
    <property type="entry name" value="Nucleoside Triphosphate Pyrophosphohydrolase"/>
    <property type="match status" value="1"/>
</dbReference>
<dbReference type="InterPro" id="IPR011876">
    <property type="entry name" value="IsopentenylPP_isomerase_typ1"/>
</dbReference>
<dbReference type="InterPro" id="IPR015797">
    <property type="entry name" value="NUDIX_hydrolase-like_dom_sf"/>
</dbReference>
<dbReference type="InterPro" id="IPR000086">
    <property type="entry name" value="NUDIX_hydrolase_dom"/>
</dbReference>
<dbReference type="NCBIfam" id="TIGR02150">
    <property type="entry name" value="IPP_isom_1"/>
    <property type="match status" value="1"/>
</dbReference>
<dbReference type="PANTHER" id="PTHR10885">
    <property type="entry name" value="ISOPENTENYL-DIPHOSPHATE DELTA-ISOMERASE"/>
    <property type="match status" value="1"/>
</dbReference>
<dbReference type="PANTHER" id="PTHR10885:SF0">
    <property type="entry name" value="ISOPENTENYL-DIPHOSPHATE DELTA-ISOMERASE"/>
    <property type="match status" value="1"/>
</dbReference>
<dbReference type="Pfam" id="PF00293">
    <property type="entry name" value="NUDIX"/>
    <property type="match status" value="1"/>
</dbReference>
<dbReference type="SUPFAM" id="SSF55811">
    <property type="entry name" value="Nudix"/>
    <property type="match status" value="1"/>
</dbReference>
<dbReference type="PROSITE" id="PS51462">
    <property type="entry name" value="NUDIX"/>
    <property type="match status" value="1"/>
</dbReference>
<keyword id="KW-0149">Chlorophyll biosynthesis</keyword>
<keyword id="KW-0413">Isomerase</keyword>
<keyword id="KW-0414">Isoprene biosynthesis</keyword>
<keyword id="KW-0602">Photosynthesis</keyword>
<reference key="1">
    <citation type="online journal article" date="1996" name="Plant Gene Register">
        <title>Nucleotide sequences of Ipi genes from Arabidopsis and Clarkia.</title>
        <authorList>
            <person name="Blanc V.M."/>
            <person name="Mullin K."/>
            <person name="Pichersky E."/>
        </authorList>
        <locator>PGR96-036</locator>
    </citation>
    <scope>NUCLEOTIDE SEQUENCE [GENOMIC DNA]</scope>
</reference>
<gene>
    <name type="primary">IPI2</name>
</gene>
<organism>
    <name type="scientific">Clarkia xantiana</name>
    <name type="common">Gunsight clarkia</name>
    <dbReference type="NCBI Taxonomy" id="3938"/>
    <lineage>
        <taxon>Eukaryota</taxon>
        <taxon>Viridiplantae</taxon>
        <taxon>Streptophyta</taxon>
        <taxon>Embryophyta</taxon>
        <taxon>Tracheophyta</taxon>
        <taxon>Spermatophyta</taxon>
        <taxon>Magnoliopsida</taxon>
        <taxon>eudicotyledons</taxon>
        <taxon>Gunneridae</taxon>
        <taxon>Pentapetalae</taxon>
        <taxon>rosids</taxon>
        <taxon>malvids</taxon>
        <taxon>Myrtales</taxon>
        <taxon>Onagraceae</taxon>
        <taxon>Onagroideae</taxon>
        <taxon>Onagreae</taxon>
        <taxon>Clarkia</taxon>
    </lineage>
</organism>
<sequence length="290" mass="32936">MSLTSRLYKPRLFSLPSQHSFRALPILSPPLRSSCIPAPLSVRASLSTRSIATSIAMGEAAADAGMDAVQRRLMFDDECILVDEVDCVVGHESKYNCHLWEKIESGNMLHRAFTVFLFNSKFELLLQQRSATKVTFPLVWTNTCCSHPLYRESELIDENNLGVRNAAQRKLLDELGIPAEDVPVDEFTPVSRMLYKAPSDGKWGEHELDYLLFIVRDVGIHPNPDEVADIKYVNREQLKELLRKADAGEEGLKLSPWFRLVVDNFLPKWWDHVEKGTLSEAVDMKTIHNL</sequence>
<accession>Q39664</accession>
<proteinExistence type="inferred from homology"/>
<comment type="function">
    <text evidence="1">Catalyzes the 1,3-allylic rearrangement of the homoallylic substrate isopentenyl (IPP) to its highly electrophilic allylic isomer, dimethylallyl diphosphate (DMAPP).</text>
</comment>
<comment type="catalytic activity">
    <reaction>
        <text>isopentenyl diphosphate = dimethylallyl diphosphate</text>
        <dbReference type="Rhea" id="RHEA:23284"/>
        <dbReference type="ChEBI" id="CHEBI:57623"/>
        <dbReference type="ChEBI" id="CHEBI:128769"/>
        <dbReference type="EC" id="5.3.3.2"/>
    </reaction>
</comment>
<comment type="pathway">
    <text>Isoprenoid biosynthesis; dimethylallyl diphosphate biosynthesis; dimethylallyl diphosphate from isopentenyl diphosphate: step 1/1.</text>
</comment>
<comment type="pathway">
    <text>Porphyrin-containing compound metabolism; chlorophyll biosynthesis.</text>
</comment>
<comment type="similarity">
    <text evidence="3">Belongs to the IPP isomerase type 1 family.</text>
</comment>
<name>IDI2_CLAXA</name>